<dbReference type="EMBL" id="CU928145">
    <property type="protein sequence ID" value="CAU98962.1"/>
    <property type="molecule type" value="Genomic_DNA"/>
</dbReference>
<dbReference type="RefSeq" id="WP_000342431.1">
    <property type="nucleotide sequence ID" value="NC_011748.1"/>
</dbReference>
<dbReference type="SMR" id="B7LEX3"/>
<dbReference type="GeneID" id="93779205"/>
<dbReference type="KEGG" id="eck:EC55989_3072"/>
<dbReference type="HOGENOM" id="CLU_121866_0_0_6"/>
<dbReference type="Proteomes" id="UP000000746">
    <property type="component" value="Chromosome"/>
</dbReference>
<dbReference type="GO" id="GO:0009898">
    <property type="term" value="C:cytoplasmic side of plasma membrane"/>
    <property type="evidence" value="ECO:0007669"/>
    <property type="project" value="InterPro"/>
</dbReference>
<dbReference type="CDD" id="cd16323">
    <property type="entry name" value="Syd"/>
    <property type="match status" value="1"/>
</dbReference>
<dbReference type="FunFam" id="3.40.1580.20:FF:000001">
    <property type="entry name" value="Protein Syd"/>
    <property type="match status" value="1"/>
</dbReference>
<dbReference type="Gene3D" id="3.40.1580.20">
    <property type="entry name" value="Syd protein"/>
    <property type="match status" value="1"/>
</dbReference>
<dbReference type="HAMAP" id="MF_01104">
    <property type="entry name" value="Syd"/>
    <property type="match status" value="1"/>
</dbReference>
<dbReference type="InterPro" id="IPR009948">
    <property type="entry name" value="Syd"/>
</dbReference>
<dbReference type="InterPro" id="IPR038228">
    <property type="entry name" value="Syd_sf"/>
</dbReference>
<dbReference type="NCBIfam" id="NF003439">
    <property type="entry name" value="PRK04968.1"/>
    <property type="match status" value="1"/>
</dbReference>
<dbReference type="Pfam" id="PF07348">
    <property type="entry name" value="Syd"/>
    <property type="match status" value="1"/>
</dbReference>
<name>SYDP_ECO55</name>
<accession>B7LEX3</accession>
<evidence type="ECO:0000255" key="1">
    <source>
        <dbReference type="HAMAP-Rule" id="MF_01104"/>
    </source>
</evidence>
<organism>
    <name type="scientific">Escherichia coli (strain 55989 / EAEC)</name>
    <dbReference type="NCBI Taxonomy" id="585055"/>
    <lineage>
        <taxon>Bacteria</taxon>
        <taxon>Pseudomonadati</taxon>
        <taxon>Pseudomonadota</taxon>
        <taxon>Gammaproteobacteria</taxon>
        <taxon>Enterobacterales</taxon>
        <taxon>Enterobacteriaceae</taxon>
        <taxon>Escherichia</taxon>
    </lineage>
</organism>
<reference key="1">
    <citation type="journal article" date="2009" name="PLoS Genet.">
        <title>Organised genome dynamics in the Escherichia coli species results in highly diverse adaptive paths.</title>
        <authorList>
            <person name="Touchon M."/>
            <person name="Hoede C."/>
            <person name="Tenaillon O."/>
            <person name="Barbe V."/>
            <person name="Baeriswyl S."/>
            <person name="Bidet P."/>
            <person name="Bingen E."/>
            <person name="Bonacorsi S."/>
            <person name="Bouchier C."/>
            <person name="Bouvet O."/>
            <person name="Calteau A."/>
            <person name="Chiapello H."/>
            <person name="Clermont O."/>
            <person name="Cruveiller S."/>
            <person name="Danchin A."/>
            <person name="Diard M."/>
            <person name="Dossat C."/>
            <person name="Karoui M.E."/>
            <person name="Frapy E."/>
            <person name="Garry L."/>
            <person name="Ghigo J.M."/>
            <person name="Gilles A.M."/>
            <person name="Johnson J."/>
            <person name="Le Bouguenec C."/>
            <person name="Lescat M."/>
            <person name="Mangenot S."/>
            <person name="Martinez-Jehanne V."/>
            <person name="Matic I."/>
            <person name="Nassif X."/>
            <person name="Oztas S."/>
            <person name="Petit M.A."/>
            <person name="Pichon C."/>
            <person name="Rouy Z."/>
            <person name="Ruf C.S."/>
            <person name="Schneider D."/>
            <person name="Tourret J."/>
            <person name="Vacherie B."/>
            <person name="Vallenet D."/>
            <person name="Medigue C."/>
            <person name="Rocha E.P.C."/>
            <person name="Denamur E."/>
        </authorList>
    </citation>
    <scope>NUCLEOTIDE SEQUENCE [LARGE SCALE GENOMIC DNA]</scope>
    <source>
        <strain>55989 / EAEC</strain>
    </source>
</reference>
<comment type="function">
    <text evidence="1">Interacts with the SecY protein in vivo. May bind preferentially to an uncomplexed state of SecY, thus functioning either as a chelating agent for excess SecY in the cell or as a regulatory factor that negatively controls the translocase function.</text>
</comment>
<comment type="subcellular location">
    <subcellularLocation>
        <location evidence="1">Cell inner membrane</location>
        <topology evidence="1">Peripheral membrane protein</topology>
        <orientation evidence="1">Cytoplasmic side</orientation>
    </subcellularLocation>
    <text evidence="1">Loosely associated with the cytoplasmic side of the inner membrane, probably via SecY.</text>
</comment>
<comment type="similarity">
    <text evidence="1">Belongs to the Syd family.</text>
</comment>
<protein>
    <recommendedName>
        <fullName evidence="1">Protein Syd</fullName>
    </recommendedName>
</protein>
<proteinExistence type="inferred from homology"/>
<keyword id="KW-0997">Cell inner membrane</keyword>
<keyword id="KW-1003">Cell membrane</keyword>
<keyword id="KW-0472">Membrane</keyword>
<keyword id="KW-1185">Reference proteome</keyword>
<sequence length="181" mass="20708">MDDLTAQALKDFTARYCDAWHEEHKSWPLSEELYGVPSPCIISTTEDAVYWQPQPFTGEQNVNAVERAFDIVIQPTIHTFYTTQFAGDMHAQFGDIKLTLLQTWSEDDFRRVQENLIGHLVTQKRLKLPPTLFIATLEEELEVISVCNLSGEVCKETLGTRKRTHLASNLAEFLNQLKPLL</sequence>
<gene>
    <name evidence="1" type="primary">syd</name>
    <name type="ordered locus">EC55989_3072</name>
</gene>
<feature type="chain" id="PRO_1000163945" description="Protein Syd">
    <location>
        <begin position="1"/>
        <end position="181"/>
    </location>
</feature>